<accession>A5EZV8</accession>
<accession>C3M5M2</accession>
<feature type="chain" id="PRO_1000072554" description="Methylglyoxal synthase">
    <location>
        <begin position="1"/>
        <end position="151"/>
    </location>
</feature>
<feature type="domain" description="MGS-like" evidence="1">
    <location>
        <begin position="1"/>
        <end position="151"/>
    </location>
</feature>
<feature type="active site" description="Proton donor/acceptor" evidence="1">
    <location>
        <position position="71"/>
    </location>
</feature>
<feature type="binding site" evidence="1">
    <location>
        <position position="19"/>
    </location>
    <ligand>
        <name>substrate</name>
    </ligand>
</feature>
<feature type="binding site" evidence="1">
    <location>
        <position position="23"/>
    </location>
    <ligand>
        <name>substrate</name>
    </ligand>
</feature>
<feature type="binding site" evidence="1">
    <location>
        <begin position="45"/>
        <end position="48"/>
    </location>
    <ligand>
        <name>substrate</name>
    </ligand>
</feature>
<feature type="binding site" evidence="1">
    <location>
        <begin position="65"/>
        <end position="66"/>
    </location>
    <ligand>
        <name>substrate</name>
    </ligand>
</feature>
<feature type="binding site" evidence="1">
    <location>
        <position position="98"/>
    </location>
    <ligand>
        <name>substrate</name>
    </ligand>
</feature>
<reference key="1">
    <citation type="submission" date="2007-03" db="EMBL/GenBank/DDBJ databases">
        <authorList>
            <person name="Heidelberg J."/>
        </authorList>
    </citation>
    <scope>NUCLEOTIDE SEQUENCE [LARGE SCALE GENOMIC DNA]</scope>
    <source>
        <strain>ATCC 39541 / Classical Ogawa 395 / O395</strain>
    </source>
</reference>
<reference key="2">
    <citation type="journal article" date="2008" name="PLoS ONE">
        <title>A recalibrated molecular clock and independent origins for the cholera pandemic clones.</title>
        <authorList>
            <person name="Feng L."/>
            <person name="Reeves P.R."/>
            <person name="Lan R."/>
            <person name="Ren Y."/>
            <person name="Gao C."/>
            <person name="Zhou Z."/>
            <person name="Ren Y."/>
            <person name="Cheng J."/>
            <person name="Wang W."/>
            <person name="Wang J."/>
            <person name="Qian W."/>
            <person name="Li D."/>
            <person name="Wang L."/>
        </authorList>
    </citation>
    <scope>NUCLEOTIDE SEQUENCE [LARGE SCALE GENOMIC DNA]</scope>
    <source>
        <strain>ATCC 39541 / Classical Ogawa 395 / O395</strain>
    </source>
</reference>
<dbReference type="EC" id="4.2.3.3" evidence="1"/>
<dbReference type="EMBL" id="CP000626">
    <property type="protein sequence ID" value="ABQ18527.1"/>
    <property type="molecule type" value="Genomic_DNA"/>
</dbReference>
<dbReference type="EMBL" id="CP001236">
    <property type="protein sequence ID" value="ACP11435.1"/>
    <property type="molecule type" value="Genomic_DNA"/>
</dbReference>
<dbReference type="RefSeq" id="WP_000754102.1">
    <property type="nucleotide sequence ID" value="NZ_JAACZH010000013.1"/>
</dbReference>
<dbReference type="SMR" id="A5EZV8"/>
<dbReference type="KEGG" id="vco:VC0395_0650"/>
<dbReference type="KEGG" id="vcr:VC395_A0601"/>
<dbReference type="PATRIC" id="fig|345073.21.peg.3342"/>
<dbReference type="eggNOG" id="COG1803">
    <property type="taxonomic scope" value="Bacteria"/>
</dbReference>
<dbReference type="HOGENOM" id="CLU_120420_0_1_6"/>
<dbReference type="OrthoDB" id="9787147at2"/>
<dbReference type="Proteomes" id="UP000000249">
    <property type="component" value="Chromosome 1"/>
</dbReference>
<dbReference type="GO" id="GO:0005829">
    <property type="term" value="C:cytosol"/>
    <property type="evidence" value="ECO:0007669"/>
    <property type="project" value="TreeGrafter"/>
</dbReference>
<dbReference type="GO" id="GO:0008929">
    <property type="term" value="F:methylglyoxal synthase activity"/>
    <property type="evidence" value="ECO:0007669"/>
    <property type="project" value="UniProtKB-UniRule"/>
</dbReference>
<dbReference type="GO" id="GO:0019242">
    <property type="term" value="P:methylglyoxal biosynthetic process"/>
    <property type="evidence" value="ECO:0007669"/>
    <property type="project" value="UniProtKB-UniRule"/>
</dbReference>
<dbReference type="CDD" id="cd01422">
    <property type="entry name" value="MGS"/>
    <property type="match status" value="1"/>
</dbReference>
<dbReference type="FunFam" id="3.40.50.1380:FF:000002">
    <property type="entry name" value="Methylglyoxal synthase"/>
    <property type="match status" value="1"/>
</dbReference>
<dbReference type="Gene3D" id="3.40.50.1380">
    <property type="entry name" value="Methylglyoxal synthase-like domain"/>
    <property type="match status" value="1"/>
</dbReference>
<dbReference type="HAMAP" id="MF_00549">
    <property type="entry name" value="Methylglyoxal_synth"/>
    <property type="match status" value="1"/>
</dbReference>
<dbReference type="InterPro" id="IPR004363">
    <property type="entry name" value="Methylgl_synth"/>
</dbReference>
<dbReference type="InterPro" id="IPR018148">
    <property type="entry name" value="Methylglyoxal_synth_AS"/>
</dbReference>
<dbReference type="InterPro" id="IPR011607">
    <property type="entry name" value="MGS-like_dom"/>
</dbReference>
<dbReference type="InterPro" id="IPR036914">
    <property type="entry name" value="MGS-like_dom_sf"/>
</dbReference>
<dbReference type="NCBIfam" id="TIGR00160">
    <property type="entry name" value="MGSA"/>
    <property type="match status" value="1"/>
</dbReference>
<dbReference type="NCBIfam" id="NF003559">
    <property type="entry name" value="PRK05234.1"/>
    <property type="match status" value="1"/>
</dbReference>
<dbReference type="PANTHER" id="PTHR30492">
    <property type="entry name" value="METHYLGLYOXAL SYNTHASE"/>
    <property type="match status" value="1"/>
</dbReference>
<dbReference type="PANTHER" id="PTHR30492:SF0">
    <property type="entry name" value="METHYLGLYOXAL SYNTHASE"/>
    <property type="match status" value="1"/>
</dbReference>
<dbReference type="Pfam" id="PF02142">
    <property type="entry name" value="MGS"/>
    <property type="match status" value="1"/>
</dbReference>
<dbReference type="PIRSF" id="PIRSF006614">
    <property type="entry name" value="Methylglyox_syn"/>
    <property type="match status" value="1"/>
</dbReference>
<dbReference type="SMART" id="SM00851">
    <property type="entry name" value="MGS"/>
    <property type="match status" value="1"/>
</dbReference>
<dbReference type="SUPFAM" id="SSF52335">
    <property type="entry name" value="Methylglyoxal synthase-like"/>
    <property type="match status" value="1"/>
</dbReference>
<dbReference type="PROSITE" id="PS01335">
    <property type="entry name" value="METHYLGLYOXAL_SYNTH"/>
    <property type="match status" value="1"/>
</dbReference>
<dbReference type="PROSITE" id="PS51855">
    <property type="entry name" value="MGS"/>
    <property type="match status" value="1"/>
</dbReference>
<name>MGSA_VIBC3</name>
<organism>
    <name type="scientific">Vibrio cholerae serotype O1 (strain ATCC 39541 / Classical Ogawa 395 / O395)</name>
    <dbReference type="NCBI Taxonomy" id="345073"/>
    <lineage>
        <taxon>Bacteria</taxon>
        <taxon>Pseudomonadati</taxon>
        <taxon>Pseudomonadota</taxon>
        <taxon>Gammaproteobacteria</taxon>
        <taxon>Vibrionales</taxon>
        <taxon>Vibrionaceae</taxon>
        <taxon>Vibrio</taxon>
    </lineage>
</organism>
<sequence length="151" mass="16847">MKKTTRTMAAHKHVALVAHDNCKGELLRWVTENKEKLQRHFLYATGTTGHMLSKETGLAIKSMISGPMGGDQQLGALISEGKIDVLIFFWDPLNAVPHDPDVKALLRIASVWNIPVATNRASAKFLFSSSLMEQEVQIEIPDYQAYLAERT</sequence>
<evidence type="ECO:0000255" key="1">
    <source>
        <dbReference type="HAMAP-Rule" id="MF_00549"/>
    </source>
</evidence>
<keyword id="KW-0456">Lyase</keyword>
<comment type="function">
    <text evidence="1">Catalyzes the formation of methylglyoxal from dihydroxyacetone phosphate.</text>
</comment>
<comment type="catalytic activity">
    <reaction evidence="1">
        <text>dihydroxyacetone phosphate = methylglyoxal + phosphate</text>
        <dbReference type="Rhea" id="RHEA:17937"/>
        <dbReference type="ChEBI" id="CHEBI:17158"/>
        <dbReference type="ChEBI" id="CHEBI:43474"/>
        <dbReference type="ChEBI" id="CHEBI:57642"/>
        <dbReference type="EC" id="4.2.3.3"/>
    </reaction>
</comment>
<comment type="similarity">
    <text evidence="1">Belongs to the methylglyoxal synthase family.</text>
</comment>
<proteinExistence type="inferred from homology"/>
<gene>
    <name evidence="1" type="primary">mgsA</name>
    <name type="ordered locus">VC0395_0650</name>
    <name type="ordered locus">VC395_A0601</name>
</gene>
<protein>
    <recommendedName>
        <fullName evidence="1">Methylglyoxal synthase</fullName>
        <shortName evidence="1">MGS</shortName>
        <ecNumber evidence="1">4.2.3.3</ecNumber>
    </recommendedName>
</protein>